<reference key="1">
    <citation type="journal article" date="1999" name="Genetics">
        <title>Crossing over during Caenorhabditis elegans meiosis requires a conserved MutS-based pathway that is partially dispensable in budding yeast.</title>
        <authorList>
            <person name="Zalevsky J."/>
            <person name="MacQueen A.J."/>
            <person name="Duffy J.B."/>
            <person name="Kemphues K.J."/>
            <person name="Villeneuve A.M."/>
        </authorList>
    </citation>
    <scope>NUCLEOTIDE SEQUENCE [MRNA]</scope>
    <scope>FUNCTION</scope>
    <scope>DEVELOPMENTAL STAGE</scope>
    <scope>MUTAGENESIS OF GLY-116; THR-238; ASP-406 AND SER-538</scope>
    <source>
        <strain>Bristol N2</strain>
    </source>
</reference>
<reference key="2">
    <citation type="journal article" date="1998" name="Science">
        <title>Genome sequence of the nematode C. elegans: a platform for investigating biology.</title>
        <authorList>
            <consortium name="The C. elegans sequencing consortium"/>
        </authorList>
    </citation>
    <scope>NUCLEOTIDE SEQUENCE [LARGE SCALE GENOMIC DNA]</scope>
    <source>
        <strain>Bristol N2</strain>
    </source>
</reference>
<reference key="3">
    <citation type="journal article" date="1988" name="Genetics">
        <title>Maternal-effect lethal mutations on linkage group II of Caenorhabditis elegans.</title>
        <authorList>
            <person name="Kemphues K.J."/>
            <person name="Kusch M."/>
            <person name="Wolf N."/>
        </authorList>
    </citation>
    <scope>IDENTIFICATION</scope>
</reference>
<reference key="4">
    <citation type="journal article" date="1995" name="Genetics">
        <title>Mutant rec-1 eliminates the meiotic pattern of crossing over in Caenorhabditis elegans.</title>
        <authorList>
            <person name="Zetka M.-C."/>
            <person name="Rose A.M."/>
        </authorList>
    </citation>
    <scope>FUNCTION</scope>
    <scope>DISRUPTION PHENOTYPE</scope>
</reference>
<reference key="5">
    <citation type="journal article" date="2006" name="PLoS Genet.">
        <title>A link between meiotic prophase progression and crossover control.</title>
        <authorList>
            <person name="Carlton P.M."/>
            <person name="Farruggio A.P."/>
            <person name="Dernburg A.F."/>
        </authorList>
    </citation>
    <scope>FUNCTION</scope>
</reference>
<reference key="6">
    <citation type="journal article" date="2013" name="Cell Death Differ.">
        <title>Pro-crossover factors regulate damage-dependent apoptosis in the Caenorhabditis elegans germ line.</title>
        <authorList>
            <person name="Silva N."/>
            <person name="Adamo A."/>
            <person name="Santonicola P."/>
            <person name="Martinez-Perez E."/>
            <person name="La Volpe A."/>
        </authorList>
    </citation>
    <scope>FUNCTION</scope>
</reference>
<comment type="function">
    <text evidence="4 5 6 7">Required during the pachytene stage of meiotic prophase for the formation of crossovers between homologous chromosomes. Together with msh-5 and zhp-3 plays a role in the activation of DNA damage-dependent apoptosis at the DNA damage checkpoint in pachytene cells (PubMed:23832114). Not needed for pairing or synapsis. May promote crossing over by interfering with Holliday junction branch migration. Has no apparent role in DNA mismatch repair.</text>
</comment>
<comment type="subunit">
    <text evidence="1">Heterooligomer of him-14 and msh-5.</text>
</comment>
<comment type="subcellular location">
    <subcellularLocation>
        <location>Nucleus</location>
    </subcellularLocation>
</comment>
<comment type="developmental stage">
    <text evidence="4">Expressed maternally.</text>
</comment>
<comment type="disruption phenotype">
    <text evidence="7">Worms show maternal effect lethality producing 95% inviable progeny from hermaphrodites. A high proportion of those that survive are male. Mutants display severely reduced crossing over, resulting in lack of chiasmata between homologous chromosomes and consequent missegregation.</text>
</comment>
<comment type="similarity">
    <text evidence="9">Belongs to the DNA mismatch repair MutS family.</text>
</comment>
<proteinExistence type="evidence at protein level"/>
<sequence>MYSNKSFQRRQRQQVAESRSEEKFSRSLVRLNAQSLLDSSGNNTTTKNVNSDVVIVVMEGRGSCEGHIGIALHDTCFPEIHLCEFVDSREYTTLKTMINVHEAFDIVIQNGNEERGSTKLLGEALMTAFPEASLQSISSKYFNSERGERQLQSLMNAEVSTVSEGCLRRTLALGALAVLLKYIHETRCVFFRVKSLRIKEMGVNDTCMIDFVSWESLEIVDADDASKARKFQMKQKRTLMSVLNHTVTTNGYRLLRSSVLQPSTDVYLIQSRQEAIEELIGKPQLKDKLRRTLSRAHELDRVIAMCIQTSTSWTVRESEAKINQIIKLMHTLKVIQGIRTLLHSAKMKSNILIEKTEFLKDPRFDQIMNILVEKVDDSLLDGKKNSLHLQNTKCYAIRHFVAVQLDLARQTYEEIIRNVEETGAREIAEYFHGNSSVRLSFSQSRGFHYTFVTRQAESVTIPRYFLDVFRNRTTVTFNSRKVIAYNDRLEQVVAEMFLASDVIVCDMIEEMQPMIPVLYYAMDALSSIDFLCGLATYSDLRDTCKPTFGPSFSISQGRHPILDWDDSEKTITNDTCLTRDRRFGIITGPNMAGKSTYLKQTAQLAIMAQIGCFIPANYASLPIFNRIFSRMGHNDELIRNKSAFASEMSDAAAIVQYADKNSLVVLDELARSTSTEEGIAITYAICEKVLKLQSYTFLATHFLDIAALANYSNAIDNYHFLPQTDENSTKKHKLLRGQYRGPLYGFELVELSTIPDEVIEHAQSLATELRANVEDTERDYDSERRRIKVYMNHRFRECAEYFMDTHGEKWKEEKEAIDKMKALRKYLVDELAKIDSQEQMCQ</sequence>
<gene>
    <name evidence="10" type="primary">him-14</name>
    <name evidence="8" type="synonym">msh-4</name>
    <name evidence="10" type="ORF">ZK1127.11</name>
</gene>
<organism>
    <name type="scientific">Caenorhabditis elegans</name>
    <dbReference type="NCBI Taxonomy" id="6239"/>
    <lineage>
        <taxon>Eukaryota</taxon>
        <taxon>Metazoa</taxon>
        <taxon>Ecdysozoa</taxon>
        <taxon>Nematoda</taxon>
        <taxon>Chromadorea</taxon>
        <taxon>Rhabditida</taxon>
        <taxon>Rhabditina</taxon>
        <taxon>Rhabditomorpha</taxon>
        <taxon>Rhabditoidea</taxon>
        <taxon>Rhabditidae</taxon>
        <taxon>Peloderinae</taxon>
        <taxon>Caenorhabditis</taxon>
    </lineage>
</organism>
<name>HIM14_CAEEL</name>
<keyword id="KW-0067">ATP-binding</keyword>
<keyword id="KW-0233">DNA recombination</keyword>
<keyword id="KW-0238">DNA-binding</keyword>
<keyword id="KW-0469">Meiosis</keyword>
<keyword id="KW-0547">Nucleotide-binding</keyword>
<keyword id="KW-0539">Nucleus</keyword>
<keyword id="KW-1185">Reference proteome</keyword>
<feature type="chain" id="PRO_0000115199" description="MutS protein homolog him-14">
    <location>
        <begin position="1"/>
        <end position="842"/>
    </location>
</feature>
<feature type="region of interest" description="Disordered" evidence="3">
    <location>
        <begin position="1"/>
        <end position="21"/>
    </location>
</feature>
<feature type="binding site" evidence="2">
    <location>
        <begin position="588"/>
        <end position="595"/>
    </location>
    <ligand>
        <name>ATP</name>
        <dbReference type="ChEBI" id="CHEBI:30616"/>
    </ligand>
</feature>
<feature type="mutagenesis site" description="In me15; defective meiotic chromosomal segregation." evidence="4">
    <original>G</original>
    <variation>E</variation>
    <location>
        <position position="116"/>
    </location>
</feature>
<feature type="mutagenesis site" description="In it13; defective meiotic chromosomal segregation." evidence="4">
    <original>T</original>
    <variation>I</variation>
    <location>
        <position position="238"/>
    </location>
</feature>
<feature type="mutagenesis site" description="In it44; induces temperature sensitivity; defective meiotic chromosomal segregation." evidence="4">
    <original>D</original>
    <variation>N</variation>
    <location>
        <position position="406"/>
    </location>
</feature>
<feature type="mutagenesis site" description="In it23; defective meiotic chromosomal segregation." evidence="4">
    <original>S</original>
    <variation>L</variation>
    <location>
        <position position="538"/>
    </location>
</feature>
<protein>
    <recommendedName>
        <fullName>MutS protein homolog him-14</fullName>
    </recommendedName>
    <alternativeName>
        <fullName>High incidence of males protein 14</fullName>
    </alternativeName>
    <alternativeName>
        <fullName>MutS protein homolog 4</fullName>
    </alternativeName>
</protein>
<accession>Q23405</accession>
<dbReference type="EMBL" id="AF178755">
    <property type="protein sequence ID" value="AAD52669.1"/>
    <property type="molecule type" value="mRNA"/>
</dbReference>
<dbReference type="EMBL" id="BX284602">
    <property type="protein sequence ID" value="CCD73725.1"/>
    <property type="molecule type" value="Genomic_DNA"/>
</dbReference>
<dbReference type="PIR" id="E88197">
    <property type="entry name" value="E88197"/>
</dbReference>
<dbReference type="RefSeq" id="NP_495451.1">
    <property type="nucleotide sequence ID" value="NM_063050.6"/>
</dbReference>
<dbReference type="SMR" id="Q23405"/>
<dbReference type="FunCoup" id="Q23405">
    <property type="interactions" value="444"/>
</dbReference>
<dbReference type="STRING" id="6239.ZK1127.11.1"/>
<dbReference type="PaxDb" id="6239-ZK1127.11"/>
<dbReference type="EnsemblMetazoa" id="ZK1127.11.1">
    <property type="protein sequence ID" value="ZK1127.11.1"/>
    <property type="gene ID" value="WBGene00001872"/>
</dbReference>
<dbReference type="GeneID" id="174157"/>
<dbReference type="KEGG" id="cel:CELE_ZK1127.11"/>
<dbReference type="UCSC" id="ZK1127.11">
    <property type="organism name" value="c. elegans"/>
</dbReference>
<dbReference type="AGR" id="WB:WBGene00001872"/>
<dbReference type="CTD" id="174157"/>
<dbReference type="WormBase" id="ZK1127.11">
    <property type="protein sequence ID" value="CE24714"/>
    <property type="gene ID" value="WBGene00001872"/>
    <property type="gene designation" value="him-14"/>
</dbReference>
<dbReference type="eggNOG" id="KOG0220">
    <property type="taxonomic scope" value="Eukaryota"/>
</dbReference>
<dbReference type="GeneTree" id="ENSGT00550000074897"/>
<dbReference type="HOGENOM" id="CLU_002472_7_3_1"/>
<dbReference type="InParanoid" id="Q23405"/>
<dbReference type="OMA" id="KMTMLYK"/>
<dbReference type="OrthoDB" id="276261at2759"/>
<dbReference type="PhylomeDB" id="Q23405"/>
<dbReference type="PRO" id="PR:Q23405"/>
<dbReference type="Proteomes" id="UP000001940">
    <property type="component" value="Chromosome II"/>
</dbReference>
<dbReference type="Bgee" id="WBGene00001872">
    <property type="expression patterns" value="Expressed in germ line (C elegans) and 3 other cell types or tissues"/>
</dbReference>
<dbReference type="GO" id="GO:0005634">
    <property type="term" value="C:nucleus"/>
    <property type="evidence" value="ECO:0000315"/>
    <property type="project" value="UniProtKB"/>
</dbReference>
<dbReference type="GO" id="GO:0005524">
    <property type="term" value="F:ATP binding"/>
    <property type="evidence" value="ECO:0007669"/>
    <property type="project" value="UniProtKB-KW"/>
</dbReference>
<dbReference type="GO" id="GO:0140664">
    <property type="term" value="F:ATP-dependent DNA damage sensor activity"/>
    <property type="evidence" value="ECO:0007669"/>
    <property type="project" value="InterPro"/>
</dbReference>
<dbReference type="GO" id="GO:0003690">
    <property type="term" value="F:double-stranded DNA binding"/>
    <property type="evidence" value="ECO:0000318"/>
    <property type="project" value="GO_Central"/>
</dbReference>
<dbReference type="GO" id="GO:0030983">
    <property type="term" value="F:mismatched DNA binding"/>
    <property type="evidence" value="ECO:0007669"/>
    <property type="project" value="InterPro"/>
</dbReference>
<dbReference type="GO" id="GO:0051026">
    <property type="term" value="P:chiasma assembly"/>
    <property type="evidence" value="ECO:0000315"/>
    <property type="project" value="WormBase"/>
</dbReference>
<dbReference type="GO" id="GO:0009792">
    <property type="term" value="P:embryo development ending in birth or egg hatching"/>
    <property type="evidence" value="ECO:0000315"/>
    <property type="project" value="WormBase"/>
</dbReference>
<dbReference type="GO" id="GO:0045143">
    <property type="term" value="P:homologous chromosome segregation"/>
    <property type="evidence" value="ECO:0000315"/>
    <property type="project" value="WormBase"/>
</dbReference>
<dbReference type="GO" id="GO:0006298">
    <property type="term" value="P:mismatch repair"/>
    <property type="evidence" value="ECO:0007669"/>
    <property type="project" value="InterPro"/>
</dbReference>
<dbReference type="GO" id="GO:0007131">
    <property type="term" value="P:reciprocal meiotic recombination"/>
    <property type="evidence" value="ECO:0000315"/>
    <property type="project" value="WormBase"/>
</dbReference>
<dbReference type="GO" id="GO:0000712">
    <property type="term" value="P:resolution of meiotic recombination intermediates"/>
    <property type="evidence" value="ECO:0000315"/>
    <property type="project" value="UniProtKB"/>
</dbReference>
<dbReference type="CDD" id="cd03282">
    <property type="entry name" value="ABC_MSH4_euk"/>
    <property type="match status" value="1"/>
</dbReference>
<dbReference type="FunFam" id="1.10.1420.10:FF:000074">
    <property type="entry name" value="MutS protein homolog him-14"/>
    <property type="match status" value="1"/>
</dbReference>
<dbReference type="FunFam" id="3.40.50.300:FF:005631">
    <property type="entry name" value="MutS protein homolog him-14"/>
    <property type="match status" value="1"/>
</dbReference>
<dbReference type="Gene3D" id="1.10.1420.10">
    <property type="match status" value="2"/>
</dbReference>
<dbReference type="Gene3D" id="3.30.420.110">
    <property type="entry name" value="MutS, connector domain"/>
    <property type="match status" value="1"/>
</dbReference>
<dbReference type="Gene3D" id="3.40.50.300">
    <property type="entry name" value="P-loop containing nucleotide triphosphate hydrolases"/>
    <property type="match status" value="1"/>
</dbReference>
<dbReference type="InterPro" id="IPR011184">
    <property type="entry name" value="DNA_mismatch_repair_Msh2"/>
</dbReference>
<dbReference type="InterPro" id="IPR000432">
    <property type="entry name" value="DNA_mismatch_repair_MutS_C"/>
</dbReference>
<dbReference type="InterPro" id="IPR007696">
    <property type="entry name" value="DNA_mismatch_repair_MutS_core"/>
</dbReference>
<dbReference type="InterPro" id="IPR036187">
    <property type="entry name" value="DNA_mismatch_repair_MutS_sf"/>
</dbReference>
<dbReference type="InterPro" id="IPR045076">
    <property type="entry name" value="MutS"/>
</dbReference>
<dbReference type="InterPro" id="IPR036678">
    <property type="entry name" value="MutS_con_dom_sf"/>
</dbReference>
<dbReference type="InterPro" id="IPR027417">
    <property type="entry name" value="P-loop_NTPase"/>
</dbReference>
<dbReference type="PANTHER" id="PTHR11361">
    <property type="entry name" value="DNA MISMATCH REPAIR PROTEIN MUTS FAMILY MEMBER"/>
    <property type="match status" value="1"/>
</dbReference>
<dbReference type="PANTHER" id="PTHR11361:SF21">
    <property type="entry name" value="MUTS PROTEIN HOMOLOG 4"/>
    <property type="match status" value="1"/>
</dbReference>
<dbReference type="Pfam" id="PF05192">
    <property type="entry name" value="MutS_III"/>
    <property type="match status" value="1"/>
</dbReference>
<dbReference type="Pfam" id="PF00488">
    <property type="entry name" value="MutS_V"/>
    <property type="match status" value="1"/>
</dbReference>
<dbReference type="PIRSF" id="PIRSF005813">
    <property type="entry name" value="MSH2"/>
    <property type="match status" value="1"/>
</dbReference>
<dbReference type="SMART" id="SM00534">
    <property type="entry name" value="MUTSac"/>
    <property type="match status" value="1"/>
</dbReference>
<dbReference type="SMART" id="SM00533">
    <property type="entry name" value="MUTSd"/>
    <property type="match status" value="1"/>
</dbReference>
<dbReference type="SUPFAM" id="SSF48334">
    <property type="entry name" value="DNA repair protein MutS, domain III"/>
    <property type="match status" value="1"/>
</dbReference>
<dbReference type="SUPFAM" id="SSF52540">
    <property type="entry name" value="P-loop containing nucleoside triphosphate hydrolases"/>
    <property type="match status" value="1"/>
</dbReference>
<dbReference type="PROSITE" id="PS00486">
    <property type="entry name" value="DNA_MISMATCH_REPAIR_2"/>
    <property type="match status" value="1"/>
</dbReference>
<evidence type="ECO:0000250" key="1">
    <source>
        <dbReference type="UniProtKB" id="P40965"/>
    </source>
</evidence>
<evidence type="ECO:0000255" key="2"/>
<evidence type="ECO:0000256" key="3">
    <source>
        <dbReference type="SAM" id="MobiDB-lite"/>
    </source>
</evidence>
<evidence type="ECO:0000269" key="4">
    <source>
    </source>
</evidence>
<evidence type="ECO:0000269" key="5">
    <source>
    </source>
</evidence>
<evidence type="ECO:0000269" key="6">
    <source>
    </source>
</evidence>
<evidence type="ECO:0000269" key="7">
    <source>
    </source>
</evidence>
<evidence type="ECO:0000303" key="8">
    <source>
    </source>
</evidence>
<evidence type="ECO:0000305" key="9"/>
<evidence type="ECO:0000312" key="10">
    <source>
        <dbReference type="WormBase" id="ZK1127.11"/>
    </source>
</evidence>